<comment type="function">
    <text evidence="1">Catalyzes the attachment of alanine to tRNA(Ala) in a two-step reaction: alanine is first activated by ATP to form Ala-AMP and then transferred to the acceptor end of tRNA(Ala). Also edits incorrectly charged Ser-tRNA(Ala) and Gly-tRNA(Ala) via its editing domain.</text>
</comment>
<comment type="catalytic activity">
    <reaction evidence="1">
        <text>tRNA(Ala) + L-alanine + ATP = L-alanyl-tRNA(Ala) + AMP + diphosphate</text>
        <dbReference type="Rhea" id="RHEA:12540"/>
        <dbReference type="Rhea" id="RHEA-COMP:9657"/>
        <dbReference type="Rhea" id="RHEA-COMP:9923"/>
        <dbReference type="ChEBI" id="CHEBI:30616"/>
        <dbReference type="ChEBI" id="CHEBI:33019"/>
        <dbReference type="ChEBI" id="CHEBI:57972"/>
        <dbReference type="ChEBI" id="CHEBI:78442"/>
        <dbReference type="ChEBI" id="CHEBI:78497"/>
        <dbReference type="ChEBI" id="CHEBI:456215"/>
        <dbReference type="EC" id="6.1.1.7"/>
    </reaction>
</comment>
<comment type="cofactor">
    <cofactor evidence="1">
        <name>Zn(2+)</name>
        <dbReference type="ChEBI" id="CHEBI:29105"/>
    </cofactor>
    <text evidence="1">Binds 1 zinc ion per subunit.</text>
</comment>
<comment type="subcellular location">
    <subcellularLocation>
        <location evidence="1">Cytoplasm</location>
    </subcellularLocation>
</comment>
<comment type="domain">
    <text evidence="1">Consists of three domains; the N-terminal catalytic domain, the editing domain and the C-terminal C-Ala domain. The editing domain removes incorrectly charged amino acids, while the C-Ala domain, along with tRNA(Ala), serves as a bridge to cooperatively bring together the editing and aminoacylation centers thus stimulating deacylation of misacylated tRNAs.</text>
</comment>
<comment type="similarity">
    <text evidence="1">Belongs to the class-II aminoacyl-tRNA synthetase family.</text>
</comment>
<dbReference type="EC" id="6.1.1.7" evidence="1"/>
<dbReference type="EMBL" id="AM849034">
    <property type="protein sequence ID" value="CAQ00849.1"/>
    <property type="molecule type" value="Genomic_DNA"/>
</dbReference>
<dbReference type="RefSeq" id="WP_012298158.1">
    <property type="nucleotide sequence ID" value="NZ_MZMN01000003.1"/>
</dbReference>
<dbReference type="SMR" id="B0REK2"/>
<dbReference type="STRING" id="31964.CMS0729"/>
<dbReference type="KEGG" id="cms:CMS0729"/>
<dbReference type="eggNOG" id="COG0013">
    <property type="taxonomic scope" value="Bacteria"/>
</dbReference>
<dbReference type="HOGENOM" id="CLU_004485_1_1_11"/>
<dbReference type="OrthoDB" id="9803884at2"/>
<dbReference type="Proteomes" id="UP000001318">
    <property type="component" value="Chromosome"/>
</dbReference>
<dbReference type="GO" id="GO:0005829">
    <property type="term" value="C:cytosol"/>
    <property type="evidence" value="ECO:0007669"/>
    <property type="project" value="TreeGrafter"/>
</dbReference>
<dbReference type="GO" id="GO:0004813">
    <property type="term" value="F:alanine-tRNA ligase activity"/>
    <property type="evidence" value="ECO:0007669"/>
    <property type="project" value="UniProtKB-UniRule"/>
</dbReference>
<dbReference type="GO" id="GO:0002161">
    <property type="term" value="F:aminoacyl-tRNA deacylase activity"/>
    <property type="evidence" value="ECO:0007669"/>
    <property type="project" value="TreeGrafter"/>
</dbReference>
<dbReference type="GO" id="GO:0005524">
    <property type="term" value="F:ATP binding"/>
    <property type="evidence" value="ECO:0007669"/>
    <property type="project" value="UniProtKB-UniRule"/>
</dbReference>
<dbReference type="GO" id="GO:0000049">
    <property type="term" value="F:tRNA binding"/>
    <property type="evidence" value="ECO:0007669"/>
    <property type="project" value="UniProtKB-KW"/>
</dbReference>
<dbReference type="GO" id="GO:0008270">
    <property type="term" value="F:zinc ion binding"/>
    <property type="evidence" value="ECO:0007669"/>
    <property type="project" value="UniProtKB-UniRule"/>
</dbReference>
<dbReference type="GO" id="GO:0006419">
    <property type="term" value="P:alanyl-tRNA aminoacylation"/>
    <property type="evidence" value="ECO:0007669"/>
    <property type="project" value="UniProtKB-UniRule"/>
</dbReference>
<dbReference type="CDD" id="cd00673">
    <property type="entry name" value="AlaRS_core"/>
    <property type="match status" value="1"/>
</dbReference>
<dbReference type="FunFam" id="3.10.310.40:FF:000001">
    <property type="entry name" value="Alanine--tRNA ligase"/>
    <property type="match status" value="1"/>
</dbReference>
<dbReference type="FunFam" id="3.30.54.20:FF:000001">
    <property type="entry name" value="Alanine--tRNA ligase"/>
    <property type="match status" value="1"/>
</dbReference>
<dbReference type="FunFam" id="3.30.980.10:FF:000004">
    <property type="entry name" value="Alanine--tRNA ligase, cytoplasmic"/>
    <property type="match status" value="1"/>
</dbReference>
<dbReference type="Gene3D" id="2.40.30.130">
    <property type="match status" value="1"/>
</dbReference>
<dbReference type="Gene3D" id="3.10.310.40">
    <property type="match status" value="1"/>
</dbReference>
<dbReference type="Gene3D" id="3.30.54.20">
    <property type="match status" value="1"/>
</dbReference>
<dbReference type="Gene3D" id="6.10.250.550">
    <property type="match status" value="1"/>
</dbReference>
<dbReference type="Gene3D" id="3.30.930.10">
    <property type="entry name" value="Bira Bifunctional Protein, Domain 2"/>
    <property type="match status" value="1"/>
</dbReference>
<dbReference type="Gene3D" id="3.30.980.10">
    <property type="entry name" value="Threonyl-trna Synthetase, Chain A, domain 2"/>
    <property type="match status" value="1"/>
</dbReference>
<dbReference type="HAMAP" id="MF_00036_B">
    <property type="entry name" value="Ala_tRNA_synth_B"/>
    <property type="match status" value="1"/>
</dbReference>
<dbReference type="InterPro" id="IPR045864">
    <property type="entry name" value="aa-tRNA-synth_II/BPL/LPL"/>
</dbReference>
<dbReference type="InterPro" id="IPR002318">
    <property type="entry name" value="Ala-tRNA-lgiase_IIc"/>
</dbReference>
<dbReference type="InterPro" id="IPR018162">
    <property type="entry name" value="Ala-tRNA-ligase_IIc_anticod-bd"/>
</dbReference>
<dbReference type="InterPro" id="IPR018165">
    <property type="entry name" value="Ala-tRNA-synth_IIc_core"/>
</dbReference>
<dbReference type="InterPro" id="IPR018164">
    <property type="entry name" value="Ala-tRNA-synth_IIc_N"/>
</dbReference>
<dbReference type="InterPro" id="IPR050058">
    <property type="entry name" value="Ala-tRNA_ligase"/>
</dbReference>
<dbReference type="InterPro" id="IPR023033">
    <property type="entry name" value="Ala_tRNA_ligase_euk/bac"/>
</dbReference>
<dbReference type="InterPro" id="IPR003156">
    <property type="entry name" value="DHHA1_dom"/>
</dbReference>
<dbReference type="InterPro" id="IPR018163">
    <property type="entry name" value="Thr/Ala-tRNA-synth_IIc_edit"/>
</dbReference>
<dbReference type="InterPro" id="IPR009000">
    <property type="entry name" value="Transl_B-barrel_sf"/>
</dbReference>
<dbReference type="InterPro" id="IPR012947">
    <property type="entry name" value="tRNA_SAD"/>
</dbReference>
<dbReference type="NCBIfam" id="TIGR00344">
    <property type="entry name" value="alaS"/>
    <property type="match status" value="1"/>
</dbReference>
<dbReference type="PANTHER" id="PTHR11777:SF9">
    <property type="entry name" value="ALANINE--TRNA LIGASE, CYTOPLASMIC"/>
    <property type="match status" value="1"/>
</dbReference>
<dbReference type="PANTHER" id="PTHR11777">
    <property type="entry name" value="ALANYL-TRNA SYNTHETASE"/>
    <property type="match status" value="1"/>
</dbReference>
<dbReference type="Pfam" id="PF02272">
    <property type="entry name" value="DHHA1"/>
    <property type="match status" value="1"/>
</dbReference>
<dbReference type="Pfam" id="PF01411">
    <property type="entry name" value="tRNA-synt_2c"/>
    <property type="match status" value="1"/>
</dbReference>
<dbReference type="Pfam" id="PF07973">
    <property type="entry name" value="tRNA_SAD"/>
    <property type="match status" value="1"/>
</dbReference>
<dbReference type="PRINTS" id="PR00980">
    <property type="entry name" value="TRNASYNTHALA"/>
</dbReference>
<dbReference type="SMART" id="SM00863">
    <property type="entry name" value="tRNA_SAD"/>
    <property type="match status" value="1"/>
</dbReference>
<dbReference type="SUPFAM" id="SSF55681">
    <property type="entry name" value="Class II aaRS and biotin synthetases"/>
    <property type="match status" value="1"/>
</dbReference>
<dbReference type="SUPFAM" id="SSF101353">
    <property type="entry name" value="Putative anticodon-binding domain of alanyl-tRNA synthetase (AlaRS)"/>
    <property type="match status" value="1"/>
</dbReference>
<dbReference type="SUPFAM" id="SSF55186">
    <property type="entry name" value="ThrRS/AlaRS common domain"/>
    <property type="match status" value="1"/>
</dbReference>
<dbReference type="SUPFAM" id="SSF50447">
    <property type="entry name" value="Translation proteins"/>
    <property type="match status" value="1"/>
</dbReference>
<dbReference type="PROSITE" id="PS50860">
    <property type="entry name" value="AA_TRNA_LIGASE_II_ALA"/>
    <property type="match status" value="1"/>
</dbReference>
<keyword id="KW-0030">Aminoacyl-tRNA synthetase</keyword>
<keyword id="KW-0067">ATP-binding</keyword>
<keyword id="KW-0963">Cytoplasm</keyword>
<keyword id="KW-0436">Ligase</keyword>
<keyword id="KW-0479">Metal-binding</keyword>
<keyword id="KW-0547">Nucleotide-binding</keyword>
<keyword id="KW-0648">Protein biosynthesis</keyword>
<keyword id="KW-0694">RNA-binding</keyword>
<keyword id="KW-0820">tRNA-binding</keyword>
<keyword id="KW-0862">Zinc</keyword>
<gene>
    <name evidence="1" type="primary">alaS</name>
    <name type="ordered locus">CMS0729</name>
</gene>
<feature type="chain" id="PRO_0000347557" description="Alanine--tRNA ligase">
    <location>
        <begin position="1"/>
        <end position="885"/>
    </location>
</feature>
<feature type="binding site" evidence="1">
    <location>
        <position position="571"/>
    </location>
    <ligand>
        <name>Zn(2+)</name>
        <dbReference type="ChEBI" id="CHEBI:29105"/>
    </ligand>
</feature>
<feature type="binding site" evidence="1">
    <location>
        <position position="575"/>
    </location>
    <ligand>
        <name>Zn(2+)</name>
        <dbReference type="ChEBI" id="CHEBI:29105"/>
    </ligand>
</feature>
<feature type="binding site" evidence="1">
    <location>
        <position position="674"/>
    </location>
    <ligand>
        <name>Zn(2+)</name>
        <dbReference type="ChEBI" id="CHEBI:29105"/>
    </ligand>
</feature>
<feature type="binding site" evidence="1">
    <location>
        <position position="678"/>
    </location>
    <ligand>
        <name>Zn(2+)</name>
        <dbReference type="ChEBI" id="CHEBI:29105"/>
    </ligand>
</feature>
<reference key="1">
    <citation type="journal article" date="2008" name="J. Bacteriol.">
        <title>Genome of the actinomycete plant pathogen Clavibacter michiganensis subsp. sepedonicus suggests recent niche adaptation.</title>
        <authorList>
            <person name="Bentley S.D."/>
            <person name="Corton C."/>
            <person name="Brown S.E."/>
            <person name="Barron A."/>
            <person name="Clark L."/>
            <person name="Doggett J."/>
            <person name="Harris B."/>
            <person name="Ormond D."/>
            <person name="Quail M.A."/>
            <person name="May G."/>
            <person name="Francis D."/>
            <person name="Knudson D."/>
            <person name="Parkhill J."/>
            <person name="Ishimaru C.A."/>
        </authorList>
    </citation>
    <scope>NUCLEOTIDE SEQUENCE [LARGE SCALE GENOMIC DNA]</scope>
    <source>
        <strain>ATCC 33113 / DSM 20744 / JCM 9667 / LMG 2889 / ICMP 2535 / C-1</strain>
    </source>
</reference>
<sequence>MQTADIRNAWLTYFGDRGHTVVPSASLVSDDPTLLFTVAGMVPFVPYLTGVVPAPFARATSVQKCIRTLDIEEVGRTPRHGTFFQMNGNFSFGDYFKEQAIAYAWELLTTSEADGGLGFSPDDLWVTVYHEDDEARQAWKRIAGLPDERIQGLGRDTNYWHTGQPGPAGPCSEIFFDRGPAYGADGGPATDDDRYVEIWNLVFMQYLRGAGTGKSDFEILGDLPTRNIDTGMGLERVAFIKQGVENMYETDQVRPVLDRAAELSGRRYGADHEDDVRMRIVADHVRSSVMLMSDGVRPSNEGRGYILRRLMRRTVRAMRLMGVDAATFGELFPASRDAMKAAYPEVSDDFDRISRLAYAEEETFLRTLSGGTTILDVAVGETKAKGGERIAGDTAFLLHDTFGFPIDLTLEMAEENGLTVDREAFDRLMLEQRTRAKADAKSKKTALADLTVYSEFRAAGETRFTGYDELETGTTILGLIVGGHSVDHAVAGDIAEVILPETSLYAESGGQEADAGSIVGQGFDLEVLDVQKPVKGLISHRVQVRSGEVGVGDAATTIVDADWRRGATQAHSGTHLVHAALRQVLGQDAHQSGSYNRAGYMRLDFAWNQALSPATRSEIEDIANGAVRDDLQVVTRVMPIDEAKQLGAMALFGEKYGDTVRVVDIGGPWSRELCAGTHVSSSAQIGLINVVGESSVGSTNRRIESLVGREAFQDLAVERAIVSQLTSSLKTPREQLPDRIADLLQNLKTAERRIADFEAQALQQRVPTLLAQGSRVGSVTLIQESLGSVRSADEVRQLVTLVRERAGSDPVVVALAGDAGGKPTVIVATNQAARDAGAKAGQLARAAAAVLGGGGGGKDDLAQGGGSDVSAIGEALAAVRQALDS</sequence>
<accession>B0REK2</accession>
<organism>
    <name type="scientific">Clavibacter sepedonicus</name>
    <name type="common">Clavibacter michiganensis subsp. sepedonicus</name>
    <dbReference type="NCBI Taxonomy" id="31964"/>
    <lineage>
        <taxon>Bacteria</taxon>
        <taxon>Bacillati</taxon>
        <taxon>Actinomycetota</taxon>
        <taxon>Actinomycetes</taxon>
        <taxon>Micrococcales</taxon>
        <taxon>Microbacteriaceae</taxon>
        <taxon>Clavibacter</taxon>
    </lineage>
</organism>
<protein>
    <recommendedName>
        <fullName evidence="1">Alanine--tRNA ligase</fullName>
        <ecNumber evidence="1">6.1.1.7</ecNumber>
    </recommendedName>
    <alternativeName>
        <fullName evidence="1">Alanyl-tRNA synthetase</fullName>
        <shortName evidence="1">AlaRS</shortName>
    </alternativeName>
</protein>
<evidence type="ECO:0000255" key="1">
    <source>
        <dbReference type="HAMAP-Rule" id="MF_00036"/>
    </source>
</evidence>
<proteinExistence type="inferred from homology"/>
<name>SYA_CLASE</name>